<organism>
    <name type="scientific">Rickettsia conorii (strain ATCC VR-613 / Malish 7)</name>
    <dbReference type="NCBI Taxonomy" id="272944"/>
    <lineage>
        <taxon>Bacteria</taxon>
        <taxon>Pseudomonadati</taxon>
        <taxon>Pseudomonadota</taxon>
        <taxon>Alphaproteobacteria</taxon>
        <taxon>Rickettsiales</taxon>
        <taxon>Rickettsiaceae</taxon>
        <taxon>Rickettsieae</taxon>
        <taxon>Rickettsia</taxon>
        <taxon>spotted fever group</taxon>
    </lineage>
</organism>
<comment type="similarity">
    <text evidence="1">Belongs to the small heat shock protein (HSP20) family.</text>
</comment>
<accession>Q92IQ7</accession>
<gene>
    <name type="primary">hspC1</name>
    <name type="ordered locus">RC0363</name>
</gene>
<protein>
    <recommendedName>
        <fullName>Small heat shock protein C1</fullName>
    </recommendedName>
</protein>
<proteinExistence type="inferred from homology"/>
<reference key="1">
    <citation type="journal article" date="2001" name="Science">
        <title>Mechanisms of evolution in Rickettsia conorii and R. prowazekii.</title>
        <authorList>
            <person name="Ogata H."/>
            <person name="Audic S."/>
            <person name="Renesto-Audiffren P."/>
            <person name="Fournier P.-E."/>
            <person name="Barbe V."/>
            <person name="Samson D."/>
            <person name="Roux V."/>
            <person name="Cossart P."/>
            <person name="Weissenbach J."/>
            <person name="Claverie J.-M."/>
            <person name="Raoult D."/>
        </authorList>
    </citation>
    <scope>NUCLEOTIDE SEQUENCE [LARGE SCALE GENOMIC DNA]</scope>
    <source>
        <strain>ATCC VR-613 / Malish 7</strain>
    </source>
</reference>
<keyword id="KW-0346">Stress response</keyword>
<sequence length="167" mass="18983">MLKSVRLYIPSIAVMILSSNIAIANKNYDAGNATPLRQVADLIDNQITNIDNLFKNRLSLYESNSIKSNFITKDKQYIIVMEVPGFDKSQIKVKVNGNKLFITGNIEEKNKADYSDNYMNKNFNYVISLYEDVDQANISSSLKNGILTIILPRIEIKEQEAREIVID</sequence>
<feature type="chain" id="PRO_0000126054" description="Small heat shock protein C1">
    <location>
        <begin position="1"/>
        <end position="167"/>
    </location>
</feature>
<feature type="domain" description="sHSP" evidence="1">
    <location>
        <begin position="59"/>
        <end position="167"/>
    </location>
</feature>
<evidence type="ECO:0000255" key="1">
    <source>
        <dbReference type="PROSITE-ProRule" id="PRU00285"/>
    </source>
</evidence>
<dbReference type="EMBL" id="AE006914">
    <property type="protein sequence ID" value="AAL02901.1"/>
    <property type="molecule type" value="Genomic_DNA"/>
</dbReference>
<dbReference type="PIR" id="C97745">
    <property type="entry name" value="C97745"/>
</dbReference>
<dbReference type="RefSeq" id="WP_010977018.1">
    <property type="nucleotide sequence ID" value="NC_003103.1"/>
</dbReference>
<dbReference type="SMR" id="Q92IQ7"/>
<dbReference type="GeneID" id="927523"/>
<dbReference type="KEGG" id="rco:RC0363"/>
<dbReference type="PATRIC" id="fig|272944.4.peg.412"/>
<dbReference type="HOGENOM" id="CLU_135634_0_0_5"/>
<dbReference type="Proteomes" id="UP000000816">
    <property type="component" value="Chromosome"/>
</dbReference>
<dbReference type="GO" id="GO:0005737">
    <property type="term" value="C:cytoplasm"/>
    <property type="evidence" value="ECO:0007669"/>
    <property type="project" value="TreeGrafter"/>
</dbReference>
<dbReference type="GO" id="GO:0051082">
    <property type="term" value="F:unfolded protein binding"/>
    <property type="evidence" value="ECO:0007669"/>
    <property type="project" value="TreeGrafter"/>
</dbReference>
<dbReference type="GO" id="GO:0042026">
    <property type="term" value="P:protein refolding"/>
    <property type="evidence" value="ECO:0007669"/>
    <property type="project" value="TreeGrafter"/>
</dbReference>
<dbReference type="GO" id="GO:0009408">
    <property type="term" value="P:response to heat"/>
    <property type="evidence" value="ECO:0007669"/>
    <property type="project" value="TreeGrafter"/>
</dbReference>
<dbReference type="CDD" id="cd06464">
    <property type="entry name" value="ACD_sHsps-like"/>
    <property type="match status" value="1"/>
</dbReference>
<dbReference type="Gene3D" id="2.60.40.790">
    <property type="match status" value="1"/>
</dbReference>
<dbReference type="InterPro" id="IPR002068">
    <property type="entry name" value="A-crystallin/Hsp20_dom"/>
</dbReference>
<dbReference type="InterPro" id="IPR001436">
    <property type="entry name" value="Alpha-crystallin/sHSP_animal"/>
</dbReference>
<dbReference type="InterPro" id="IPR008978">
    <property type="entry name" value="HSP20-like_chaperone"/>
</dbReference>
<dbReference type="PANTHER" id="PTHR45640">
    <property type="entry name" value="HEAT SHOCK PROTEIN HSP-12.2-RELATED"/>
    <property type="match status" value="1"/>
</dbReference>
<dbReference type="PANTHER" id="PTHR45640:SF26">
    <property type="entry name" value="RE23625P"/>
    <property type="match status" value="1"/>
</dbReference>
<dbReference type="Pfam" id="PF00011">
    <property type="entry name" value="HSP20"/>
    <property type="match status" value="1"/>
</dbReference>
<dbReference type="SUPFAM" id="SSF49764">
    <property type="entry name" value="HSP20-like chaperones"/>
    <property type="match status" value="1"/>
</dbReference>
<dbReference type="PROSITE" id="PS01031">
    <property type="entry name" value="SHSP"/>
    <property type="match status" value="1"/>
</dbReference>
<name>HSPC1_RICCN</name>